<keyword id="KW-0968">Cytoplasmic vesicle</keyword>
<keyword id="KW-1015">Disulfide bond</keyword>
<keyword id="KW-0325">Glycoprotein</keyword>
<keyword id="KW-0391">Immunity</keyword>
<keyword id="KW-0395">Inflammatory response</keyword>
<keyword id="KW-0399">Innate immunity</keyword>
<keyword id="KW-1017">Isopeptide bond</keyword>
<keyword id="KW-0433">Leucine-rich repeat</keyword>
<keyword id="KW-0472">Membrane</keyword>
<keyword id="KW-0520">NAD</keyword>
<keyword id="KW-0675">Receptor</keyword>
<keyword id="KW-1185">Reference proteome</keyword>
<keyword id="KW-0677">Repeat</keyword>
<keyword id="KW-0732">Signal</keyword>
<keyword id="KW-0812">Transmembrane</keyword>
<keyword id="KW-1133">Transmembrane helix</keyword>
<keyword id="KW-0832">Ubl conjugation</keyword>
<sequence length="785" mass="90277">MSRVLWTLWVLGAVTNLSKEEAPDQSSSLSCDPTGVCDGRSRSLNSMPSGLTAAVRSLDLSNNEITYIGNSDLRDCVNLKALRLESNGINTIEEESFLSLWSLEHLDLSYNLLSNLSSSWFRPLSSLKFLNLLGNPYKSLGETPLFSQLTNLRILKVGNIYSFTEIQDKDFAGLTFLEELEIDASNLQRYEPKSLKSIQNISYLALRMKQPVLLVEIFVDLSSSLKHLELRDTHLDTFHFSEASINETHTLVKKWTFRNVKVTDRSFTGVVRLLNYVSGVLEVEFEDCTLYGLGDFDIPDVDKIKNIGQIETLTVRRLHIPHFYSFYDMSSIYSLTEDVKRITVENSKVFLVPCLLSQHLKSLEYLDLSENLMVEEYLKNSACEDAWPSLQTLVLRQNHLASLERTGETLLTLKNLTNIDISKNSFHSMPETCQWPEKMKYLNLSSTRIHSVTGCIPKTLEILDVSNNNLNLFSLNLPQLKELYISRNKLMTLPDASLLPMLLVLKISRNAITTFSKEQLDSFHTLKTLEAGGNNFICSCEFLSFTQEQQALAKVLIDWPANYLCDSPSHVRGQQVQDVRLSVSECHRTALVSGMCCALFLLILLTEVLCHRFHGLWYMRMMWAWLQAKRKPRKAPSRDVCYDAFVSYSEHDSYWVENLLVQKLEHFNPPFKLCLHKRDFIPGKWIIDNIIDSIEKSRKTIFVLSENFVKSEWCKYELDFSHFRLFDENSDAAILILLEPIEKKAIPQRFCKLRKIMNTKTYLEWPTDDAQQEGFWLNLRTAIKS</sequence>
<comment type="function">
    <text evidence="3 4">Cooperates with LY96 to mediate the innate immune response to bacterial lipoproteins and other microbial cell wall components. Cooperates with TLR1 or TLR6 to mediate the innate immune response to bacterial lipoproteins or lipopeptides. Acts via MYD88 and TRAF6, leading to NF-kappa-B activation, cytokine secretion and the inflammatory response (By similarity). May also promote apoptosis in response to lipoproteins. Forms activation clusters composed of several receptors depending on the ligand, these clusters trigger signaling from the cell surface and subsequently are targeted to the Golgi in a lipid-raft dependent pathway. Forms the cluster TLR2:TLR6:CD14:CD36 in response to diacylated lipopeptides and TLR2:TLR1:CD14 in response to triacylated lipopeptides (By similarity).</text>
</comment>
<comment type="subunit">
    <text evidence="3 4">Interacts with LY96, TLR1 and TLR6 (via extracellular domain). TLR2 seems to exist in heterodimers with either TLR1 or TLR6 before stimulation by the ligand. The heterodimers form bigger oligomers in response to their corresponding ligands as well as further heterotypic associations with other receptors such as CD14 and/or CD36. Binds MYD88 (via TIR domain). Interacts with TICAM1. Interacts with CNPY3. Interacts with ATG16L1. Interacts with PPP1R11. Interacts with TICAM2. Interacts with TIRAP (By similarity).</text>
</comment>
<comment type="subcellular location">
    <subcellularLocation>
        <location evidence="4">Membrane</location>
        <topology evidence="5">Single-pass type I membrane protein</topology>
    </subcellularLocation>
    <subcellularLocation>
        <location evidence="4">Cytoplasmic vesicle</location>
        <location evidence="4">Phagosome membrane</location>
        <topology evidence="5">Single-pass type I membrane protein</topology>
    </subcellularLocation>
    <subcellularLocation>
        <location evidence="3">Membrane raft</location>
    </subcellularLocation>
    <text evidence="3">Does not reside in lipid rafts before stimulation but accumulates increasingly in the raft upon the presence of the microbial ligand. In response to diacylated lipoproteins, TLR2:TLR6 heterodimers are recruited in lipid rafts, this recruitment determine the intracellular targeting to the Golgi apparatus. Triacylated lipoproteins induce the same mechanism for TLR2:TLR1 heterodimers.</text>
</comment>
<comment type="domain">
    <text evidence="1">Ester-bound lipid substrates are bound through a crevice formed between the LRR 11 and LRR 12.</text>
</comment>
<comment type="domain">
    <text evidence="1">The ATG16L1-binding motif mediates interaction with ATG16L1.</text>
</comment>
<comment type="PTM">
    <text evidence="4">Ubiquitinated at Lys-755 by PPP1R11, leading to its degradation. Deubiquitinated by USP2.</text>
</comment>
<comment type="PTM">
    <text evidence="3">Glycosylation of Asn-443 is critical for secretion of the N-terminal ectodomain of TLR2.</text>
</comment>
<comment type="similarity">
    <text evidence="7">Belongs to the Toll-like receptor family.</text>
</comment>
<comment type="caution">
    <text evidence="2 7">In some plant proteins and in human SARM1, the TIR domain has NAD(+) hydrolase (NADase) activity (By similarity). However, despite the presence of the catalytic Asp residue, the isolated TIR domain of human TLR4 lacks NADase activity (By similarity). Based on this, it is unlikely that Toll-like receptors have NADase activity.</text>
</comment>
<dbReference type="EMBL" id="AB189639">
    <property type="protein sequence ID" value="BAD42423.1"/>
    <property type="molecule type" value="mRNA"/>
</dbReference>
<dbReference type="SMR" id="Q689D1"/>
<dbReference type="FunCoup" id="Q689D1">
    <property type="interactions" value="9"/>
</dbReference>
<dbReference type="STRING" id="9615.ENSCAFP00000012269"/>
<dbReference type="GlyCosmos" id="Q689D1">
    <property type="glycosylation" value="5 sites, No reported glycans"/>
</dbReference>
<dbReference type="eggNOG" id="KOG4641">
    <property type="taxonomic scope" value="Eukaryota"/>
</dbReference>
<dbReference type="InParanoid" id="Q689D1"/>
<dbReference type="OrthoDB" id="1081807at2759"/>
<dbReference type="Proteomes" id="UP000002254">
    <property type="component" value="Unplaced"/>
</dbReference>
<dbReference type="Proteomes" id="UP000694429">
    <property type="component" value="Unplaced"/>
</dbReference>
<dbReference type="Proteomes" id="UP000694542">
    <property type="component" value="Unplaced"/>
</dbReference>
<dbReference type="Proteomes" id="UP000805418">
    <property type="component" value="Unplaced"/>
</dbReference>
<dbReference type="GO" id="GO:0005794">
    <property type="term" value="C:Golgi apparatus"/>
    <property type="evidence" value="ECO:0000250"/>
    <property type="project" value="UniProtKB"/>
</dbReference>
<dbReference type="GO" id="GO:0045121">
    <property type="term" value="C:membrane raft"/>
    <property type="evidence" value="ECO:0000250"/>
    <property type="project" value="UniProtKB"/>
</dbReference>
<dbReference type="GO" id="GO:0030670">
    <property type="term" value="C:phagocytic vesicle membrane"/>
    <property type="evidence" value="ECO:0007669"/>
    <property type="project" value="UniProtKB-SubCell"/>
</dbReference>
<dbReference type="GO" id="GO:0005886">
    <property type="term" value="C:plasma membrane"/>
    <property type="evidence" value="ECO:0000318"/>
    <property type="project" value="GO_Central"/>
</dbReference>
<dbReference type="GO" id="GO:0043235">
    <property type="term" value="C:receptor complex"/>
    <property type="evidence" value="ECO:0000318"/>
    <property type="project" value="GO_Central"/>
</dbReference>
<dbReference type="GO" id="GO:0061809">
    <property type="term" value="F:NAD+ nucleosidase activity, cyclic ADP-ribose generating"/>
    <property type="evidence" value="ECO:0007669"/>
    <property type="project" value="UniProtKB-EC"/>
</dbReference>
<dbReference type="GO" id="GO:0038023">
    <property type="term" value="F:signaling receptor activity"/>
    <property type="evidence" value="ECO:0000318"/>
    <property type="project" value="GO_Central"/>
</dbReference>
<dbReference type="GO" id="GO:0004888">
    <property type="term" value="F:transmembrane signaling receptor activity"/>
    <property type="evidence" value="ECO:0007669"/>
    <property type="project" value="InterPro"/>
</dbReference>
<dbReference type="GO" id="GO:0042497">
    <property type="term" value="F:triacyl lipopeptide binding"/>
    <property type="evidence" value="ECO:0000318"/>
    <property type="project" value="GO_Central"/>
</dbReference>
<dbReference type="GO" id="GO:0071726">
    <property type="term" value="P:cellular response to diacyl bacterial lipopeptide"/>
    <property type="evidence" value="ECO:0000250"/>
    <property type="project" value="UniProtKB"/>
</dbReference>
<dbReference type="GO" id="GO:0071727">
    <property type="term" value="P:cellular response to triacyl bacterial lipopeptide"/>
    <property type="evidence" value="ECO:0000250"/>
    <property type="project" value="UniProtKB"/>
</dbReference>
<dbReference type="GO" id="GO:0006954">
    <property type="term" value="P:inflammatory response"/>
    <property type="evidence" value="ECO:0000318"/>
    <property type="project" value="GO_Central"/>
</dbReference>
<dbReference type="GO" id="GO:0045087">
    <property type="term" value="P:innate immune response"/>
    <property type="evidence" value="ECO:0007669"/>
    <property type="project" value="UniProtKB-KW"/>
</dbReference>
<dbReference type="GO" id="GO:0002224">
    <property type="term" value="P:toll-like receptor signaling pathway"/>
    <property type="evidence" value="ECO:0000318"/>
    <property type="project" value="GO_Central"/>
</dbReference>
<dbReference type="FunFam" id="3.40.50.10140:FF:000001">
    <property type="entry name" value="Toll-like receptor 2"/>
    <property type="match status" value="1"/>
</dbReference>
<dbReference type="FunFam" id="3.80.10.10:FF:000046">
    <property type="entry name" value="Toll-like receptor 2"/>
    <property type="match status" value="1"/>
</dbReference>
<dbReference type="Gene3D" id="3.80.10.10">
    <property type="entry name" value="Ribonuclease Inhibitor"/>
    <property type="match status" value="1"/>
</dbReference>
<dbReference type="Gene3D" id="3.40.50.10140">
    <property type="entry name" value="Toll/interleukin-1 receptor homology (TIR) domain"/>
    <property type="match status" value="1"/>
</dbReference>
<dbReference type="InterPro" id="IPR000483">
    <property type="entry name" value="Cys-rich_flank_reg_C"/>
</dbReference>
<dbReference type="InterPro" id="IPR001611">
    <property type="entry name" value="Leu-rich_rpt"/>
</dbReference>
<dbReference type="InterPro" id="IPR003591">
    <property type="entry name" value="Leu-rich_rpt_typical-subtyp"/>
</dbReference>
<dbReference type="InterPro" id="IPR032675">
    <property type="entry name" value="LRR_dom_sf"/>
</dbReference>
<dbReference type="InterPro" id="IPR000157">
    <property type="entry name" value="TIR_dom"/>
</dbReference>
<dbReference type="InterPro" id="IPR017241">
    <property type="entry name" value="Toll-like_receptor"/>
</dbReference>
<dbReference type="InterPro" id="IPR035897">
    <property type="entry name" value="Toll_tir_struct_dom_sf"/>
</dbReference>
<dbReference type="PANTHER" id="PTHR24365">
    <property type="entry name" value="TOLL-LIKE RECEPTOR"/>
    <property type="match status" value="1"/>
</dbReference>
<dbReference type="PANTHER" id="PTHR24365:SF17">
    <property type="entry name" value="TOLL-LIKE RECEPTOR 2"/>
    <property type="match status" value="1"/>
</dbReference>
<dbReference type="Pfam" id="PF13855">
    <property type="entry name" value="LRR_8"/>
    <property type="match status" value="2"/>
</dbReference>
<dbReference type="Pfam" id="PF01463">
    <property type="entry name" value="LRRCT"/>
    <property type="match status" value="1"/>
</dbReference>
<dbReference type="Pfam" id="PF01582">
    <property type="entry name" value="TIR"/>
    <property type="match status" value="1"/>
</dbReference>
<dbReference type="PIRSF" id="PIRSF037595">
    <property type="entry name" value="Toll-like_receptor"/>
    <property type="match status" value="1"/>
</dbReference>
<dbReference type="PRINTS" id="PR01537">
    <property type="entry name" value="INTRLKN1R1F"/>
</dbReference>
<dbReference type="SMART" id="SM00364">
    <property type="entry name" value="LRR_BAC"/>
    <property type="match status" value="4"/>
</dbReference>
<dbReference type="SMART" id="SM00369">
    <property type="entry name" value="LRR_TYP"/>
    <property type="match status" value="7"/>
</dbReference>
<dbReference type="SMART" id="SM00082">
    <property type="entry name" value="LRRCT"/>
    <property type="match status" value="1"/>
</dbReference>
<dbReference type="SMART" id="SM00255">
    <property type="entry name" value="TIR"/>
    <property type="match status" value="1"/>
</dbReference>
<dbReference type="SUPFAM" id="SSF52058">
    <property type="entry name" value="L domain-like"/>
    <property type="match status" value="2"/>
</dbReference>
<dbReference type="SUPFAM" id="SSF52200">
    <property type="entry name" value="Toll/Interleukin receptor TIR domain"/>
    <property type="match status" value="1"/>
</dbReference>
<dbReference type="PROSITE" id="PS51450">
    <property type="entry name" value="LRR"/>
    <property type="match status" value="11"/>
</dbReference>
<dbReference type="PROSITE" id="PS50104">
    <property type="entry name" value="TIR"/>
    <property type="match status" value="1"/>
</dbReference>
<proteinExistence type="evidence at transcript level"/>
<organism>
    <name type="scientific">Canis lupus familiaris</name>
    <name type="common">Dog</name>
    <name type="synonym">Canis familiaris</name>
    <dbReference type="NCBI Taxonomy" id="9615"/>
    <lineage>
        <taxon>Eukaryota</taxon>
        <taxon>Metazoa</taxon>
        <taxon>Chordata</taxon>
        <taxon>Craniata</taxon>
        <taxon>Vertebrata</taxon>
        <taxon>Euteleostomi</taxon>
        <taxon>Mammalia</taxon>
        <taxon>Eutheria</taxon>
        <taxon>Laurasiatheria</taxon>
        <taxon>Carnivora</taxon>
        <taxon>Caniformia</taxon>
        <taxon>Canidae</taxon>
        <taxon>Canis</taxon>
    </lineage>
</organism>
<protein>
    <recommendedName>
        <fullName>Toll-like receptor 2</fullName>
    </recommendedName>
    <cdAntigenName>CD282</cdAntigenName>
</protein>
<feature type="signal peptide" evidence="5">
    <location>
        <begin position="1"/>
        <end position="17"/>
    </location>
</feature>
<feature type="chain" id="PRO_0000034708" description="Toll-like receptor 2">
    <location>
        <begin position="18"/>
        <end position="785"/>
    </location>
</feature>
<feature type="topological domain" description="Extracellular" evidence="5">
    <location>
        <begin position="18"/>
        <end position="589"/>
    </location>
</feature>
<feature type="transmembrane region" description="Helical" evidence="5">
    <location>
        <begin position="590"/>
        <end position="610"/>
    </location>
</feature>
<feature type="topological domain" description="Cytoplasmic" evidence="5">
    <location>
        <begin position="611"/>
        <end position="785"/>
    </location>
</feature>
<feature type="repeat" description="LRR 1">
    <location>
        <begin position="54"/>
        <end position="77"/>
    </location>
</feature>
<feature type="repeat" description="LRR 2">
    <location>
        <begin position="78"/>
        <end position="101"/>
    </location>
</feature>
<feature type="repeat" description="LRR 3">
    <location>
        <begin position="102"/>
        <end position="125"/>
    </location>
</feature>
<feature type="repeat" description="LRR 4">
    <location>
        <begin position="126"/>
        <end position="150"/>
    </location>
</feature>
<feature type="repeat" description="LRR 5">
    <location>
        <begin position="151"/>
        <end position="175"/>
    </location>
</feature>
<feature type="repeat" description="LRR 6">
    <location>
        <begin position="176"/>
        <end position="199"/>
    </location>
</feature>
<feature type="repeat" description="LRR 7">
    <location>
        <begin position="200"/>
        <end position="223"/>
    </location>
</feature>
<feature type="repeat" description="LRR 8">
    <location>
        <begin position="224"/>
        <end position="250"/>
    </location>
</feature>
<feature type="repeat" description="LRR 9">
    <location>
        <begin position="251"/>
        <end position="278"/>
    </location>
</feature>
<feature type="repeat" description="LRR 10">
    <location>
        <begin position="279"/>
        <end position="308"/>
    </location>
</feature>
<feature type="repeat" description="LRR 11">
    <location>
        <begin position="309"/>
        <end position="337"/>
    </location>
</feature>
<feature type="repeat" description="LRR 12">
    <location>
        <begin position="338"/>
        <end position="361"/>
    </location>
</feature>
<feature type="repeat" description="LRR 13">
    <location>
        <begin position="362"/>
        <end position="388"/>
    </location>
</feature>
<feature type="repeat" description="LRR 14">
    <location>
        <begin position="389"/>
        <end position="414"/>
    </location>
</feature>
<feature type="repeat" description="LRR 15">
    <location>
        <begin position="415"/>
        <end position="437"/>
    </location>
</feature>
<feature type="repeat" description="LRR 16">
    <location>
        <begin position="438"/>
        <end position="457"/>
    </location>
</feature>
<feature type="repeat" description="LRR 17">
    <location>
        <begin position="458"/>
        <end position="478"/>
    </location>
</feature>
<feature type="repeat" description="LRR 18">
    <location>
        <begin position="479"/>
        <end position="500"/>
    </location>
</feature>
<feature type="repeat" description="LRR 19">
    <location>
        <begin position="501"/>
        <end position="524"/>
    </location>
</feature>
<feature type="domain" description="LRRCT">
    <location>
        <begin position="525"/>
        <end position="579"/>
    </location>
</feature>
<feature type="domain" description="TIR" evidence="6">
    <location>
        <begin position="640"/>
        <end position="783"/>
    </location>
</feature>
<feature type="short sequence motif" description="ATG16L1-binding motif">
    <location>
        <begin position="762"/>
        <end position="779"/>
    </location>
</feature>
<feature type="site" description="Interaction with bacterial lipopeptide" evidence="1">
    <location>
        <position position="350"/>
    </location>
</feature>
<feature type="glycosylation site" description="N-linked (GlcNAc...) asparagine" evidence="5">
    <location>
        <position position="115"/>
    </location>
</feature>
<feature type="glycosylation site" description="N-linked (GlcNAc...) asparagine" evidence="5">
    <location>
        <position position="200"/>
    </location>
</feature>
<feature type="glycosylation site" description="N-linked (GlcNAc...) asparagine" evidence="5">
    <location>
        <position position="246"/>
    </location>
</feature>
<feature type="glycosylation site" description="N-linked (GlcNAc...) asparagine" evidence="5">
    <location>
        <position position="415"/>
    </location>
</feature>
<feature type="glycosylation site" description="N-linked (GlcNAc...) asparagine" evidence="5">
    <location>
        <position position="443"/>
    </location>
</feature>
<feature type="disulfide bond" evidence="1">
    <location>
        <begin position="31"/>
        <end position="37"/>
    </location>
</feature>
<feature type="disulfide bond" evidence="1">
    <location>
        <begin position="354"/>
        <end position="383"/>
    </location>
</feature>
<feature type="disulfide bond" evidence="1">
    <location>
        <begin position="433"/>
        <end position="455"/>
    </location>
</feature>
<feature type="cross-link" description="Glycyl lysine isopeptide (Lys-Gly) (interchain with G-Cter in ubiquitin)" evidence="3">
    <location>
        <position position="755"/>
    </location>
</feature>
<accession>Q689D1</accession>
<name>TLR2_CANLF</name>
<evidence type="ECO:0000250" key="1"/>
<evidence type="ECO:0000250" key="2">
    <source>
        <dbReference type="UniProtKB" id="O00206"/>
    </source>
</evidence>
<evidence type="ECO:0000250" key="3">
    <source>
        <dbReference type="UniProtKB" id="O60603"/>
    </source>
</evidence>
<evidence type="ECO:0000250" key="4">
    <source>
        <dbReference type="UniProtKB" id="Q9QUN7"/>
    </source>
</evidence>
<evidence type="ECO:0000255" key="5"/>
<evidence type="ECO:0000255" key="6">
    <source>
        <dbReference type="PROSITE-ProRule" id="PRU00204"/>
    </source>
</evidence>
<evidence type="ECO:0000305" key="7"/>
<gene>
    <name type="primary">TLR2</name>
</gene>
<reference key="1">
    <citation type="submission" date="2004-09" db="EMBL/GenBank/DDBJ databases">
        <title>Molecular cloning of canine Toll-like receptor 2 (TLR2) gene.</title>
        <authorList>
            <person name="Ishii M."/>
            <person name="Kano R."/>
            <person name="Hasegawa A."/>
        </authorList>
    </citation>
    <scope>NUCLEOTIDE SEQUENCE [MRNA]</scope>
</reference>